<dbReference type="EMBL" id="AP006716">
    <property type="protein sequence ID" value="BAE04116.1"/>
    <property type="molecule type" value="Genomic_DNA"/>
</dbReference>
<dbReference type="RefSeq" id="WP_001829734.1">
    <property type="nucleotide sequence ID" value="NC_007168.1"/>
</dbReference>
<dbReference type="SMR" id="Q4L8A9"/>
<dbReference type="GeneID" id="93780196"/>
<dbReference type="KEGG" id="sha:SH0807"/>
<dbReference type="eggNOG" id="COG0091">
    <property type="taxonomic scope" value="Bacteria"/>
</dbReference>
<dbReference type="HOGENOM" id="CLU_083987_3_3_9"/>
<dbReference type="OrthoDB" id="9805969at2"/>
<dbReference type="Proteomes" id="UP000000543">
    <property type="component" value="Chromosome"/>
</dbReference>
<dbReference type="GO" id="GO:0022625">
    <property type="term" value="C:cytosolic large ribosomal subunit"/>
    <property type="evidence" value="ECO:0007669"/>
    <property type="project" value="TreeGrafter"/>
</dbReference>
<dbReference type="GO" id="GO:0019843">
    <property type="term" value="F:rRNA binding"/>
    <property type="evidence" value="ECO:0007669"/>
    <property type="project" value="UniProtKB-UniRule"/>
</dbReference>
<dbReference type="GO" id="GO:0003735">
    <property type="term" value="F:structural constituent of ribosome"/>
    <property type="evidence" value="ECO:0007669"/>
    <property type="project" value="InterPro"/>
</dbReference>
<dbReference type="GO" id="GO:0006412">
    <property type="term" value="P:translation"/>
    <property type="evidence" value="ECO:0007669"/>
    <property type="project" value="UniProtKB-UniRule"/>
</dbReference>
<dbReference type="CDD" id="cd00336">
    <property type="entry name" value="Ribosomal_L22"/>
    <property type="match status" value="1"/>
</dbReference>
<dbReference type="FunFam" id="3.90.470.10:FF:000001">
    <property type="entry name" value="50S ribosomal protein L22"/>
    <property type="match status" value="1"/>
</dbReference>
<dbReference type="Gene3D" id="3.90.470.10">
    <property type="entry name" value="Ribosomal protein L22/L17"/>
    <property type="match status" value="1"/>
</dbReference>
<dbReference type="HAMAP" id="MF_01331_B">
    <property type="entry name" value="Ribosomal_uL22_B"/>
    <property type="match status" value="1"/>
</dbReference>
<dbReference type="InterPro" id="IPR001063">
    <property type="entry name" value="Ribosomal_uL22"/>
</dbReference>
<dbReference type="InterPro" id="IPR005727">
    <property type="entry name" value="Ribosomal_uL22_bac/chlpt-type"/>
</dbReference>
<dbReference type="InterPro" id="IPR047867">
    <property type="entry name" value="Ribosomal_uL22_bac/org-type"/>
</dbReference>
<dbReference type="InterPro" id="IPR018260">
    <property type="entry name" value="Ribosomal_uL22_CS"/>
</dbReference>
<dbReference type="InterPro" id="IPR036394">
    <property type="entry name" value="Ribosomal_uL22_sf"/>
</dbReference>
<dbReference type="NCBIfam" id="TIGR01044">
    <property type="entry name" value="rplV_bact"/>
    <property type="match status" value="1"/>
</dbReference>
<dbReference type="PANTHER" id="PTHR13501">
    <property type="entry name" value="CHLOROPLAST 50S RIBOSOMAL PROTEIN L22-RELATED"/>
    <property type="match status" value="1"/>
</dbReference>
<dbReference type="PANTHER" id="PTHR13501:SF8">
    <property type="entry name" value="LARGE RIBOSOMAL SUBUNIT PROTEIN UL22M"/>
    <property type="match status" value="1"/>
</dbReference>
<dbReference type="Pfam" id="PF00237">
    <property type="entry name" value="Ribosomal_L22"/>
    <property type="match status" value="1"/>
</dbReference>
<dbReference type="SUPFAM" id="SSF54843">
    <property type="entry name" value="Ribosomal protein L22"/>
    <property type="match status" value="1"/>
</dbReference>
<dbReference type="PROSITE" id="PS00464">
    <property type="entry name" value="RIBOSOMAL_L22"/>
    <property type="match status" value="1"/>
</dbReference>
<accession>Q4L8A9</accession>
<comment type="function">
    <text evidence="1">This protein binds specifically to 23S rRNA; its binding is stimulated by other ribosomal proteins, e.g. L4, L17, and L20. It is important during the early stages of 50S assembly. It makes multiple contacts with different domains of the 23S rRNA in the assembled 50S subunit and ribosome (By similarity).</text>
</comment>
<comment type="function">
    <text evidence="1">The globular domain of the protein is located near the polypeptide exit tunnel on the outside of the subunit, while an extended beta-hairpin is found that lines the wall of the exit tunnel in the center of the 70S ribosome.</text>
</comment>
<comment type="subunit">
    <text evidence="1">Part of the 50S ribosomal subunit.</text>
</comment>
<comment type="similarity">
    <text evidence="1">Belongs to the universal ribosomal protein uL22 family.</text>
</comment>
<name>RL22_STAHJ</name>
<protein>
    <recommendedName>
        <fullName evidence="1">Large ribosomal subunit protein uL22</fullName>
    </recommendedName>
    <alternativeName>
        <fullName evidence="2">50S ribosomal protein L22</fullName>
    </alternativeName>
</protein>
<organism>
    <name type="scientific">Staphylococcus haemolyticus (strain JCSC1435)</name>
    <dbReference type="NCBI Taxonomy" id="279808"/>
    <lineage>
        <taxon>Bacteria</taxon>
        <taxon>Bacillati</taxon>
        <taxon>Bacillota</taxon>
        <taxon>Bacilli</taxon>
        <taxon>Bacillales</taxon>
        <taxon>Staphylococcaceae</taxon>
        <taxon>Staphylococcus</taxon>
    </lineage>
</organism>
<keyword id="KW-0687">Ribonucleoprotein</keyword>
<keyword id="KW-0689">Ribosomal protein</keyword>
<keyword id="KW-0694">RNA-binding</keyword>
<keyword id="KW-0699">rRNA-binding</keyword>
<proteinExistence type="inferred from homology"/>
<sequence>MEAKAVARTIRIAPRKVRLVLDLIRGKNAGEAIAILKLTNKASSPVIEKVLMSALANAEHNYDMNTDELVVKEAYANEGPTLKRFRPRAQGRASAINKRTSHITIVVSDGKEEAKEA</sequence>
<evidence type="ECO:0000255" key="1">
    <source>
        <dbReference type="HAMAP-Rule" id="MF_01331"/>
    </source>
</evidence>
<evidence type="ECO:0000305" key="2"/>
<gene>
    <name evidence="1" type="primary">rplV</name>
    <name type="ordered locus">SH0807</name>
</gene>
<reference key="1">
    <citation type="journal article" date="2005" name="J. Bacteriol.">
        <title>Whole-genome sequencing of Staphylococcus haemolyticus uncovers the extreme plasticity of its genome and the evolution of human-colonizing staphylococcal species.</title>
        <authorList>
            <person name="Takeuchi F."/>
            <person name="Watanabe S."/>
            <person name="Baba T."/>
            <person name="Yuzawa H."/>
            <person name="Ito T."/>
            <person name="Morimoto Y."/>
            <person name="Kuroda M."/>
            <person name="Cui L."/>
            <person name="Takahashi M."/>
            <person name="Ankai A."/>
            <person name="Baba S."/>
            <person name="Fukui S."/>
            <person name="Lee J.C."/>
            <person name="Hiramatsu K."/>
        </authorList>
    </citation>
    <scope>NUCLEOTIDE SEQUENCE [LARGE SCALE GENOMIC DNA]</scope>
    <source>
        <strain>JCSC1435</strain>
    </source>
</reference>
<feature type="chain" id="PRO_0000125229" description="Large ribosomal subunit protein uL22">
    <location>
        <begin position="1"/>
        <end position="117"/>
    </location>
</feature>